<proteinExistence type="inferred from homology"/>
<keyword id="KW-0997">Cell inner membrane</keyword>
<keyword id="KW-1003">Cell membrane</keyword>
<keyword id="KW-0472">Membrane</keyword>
<keyword id="KW-1185">Reference proteome</keyword>
<keyword id="KW-0812">Transmembrane</keyword>
<keyword id="KW-1133">Transmembrane helix</keyword>
<sequence>MFNRPNRNDVDDGVQDIQNDVNQLADSLESVLKSWGSDAKGEAEAARSKAQALLKETRARMHGRTRVQQAARDAVGCADSFVRERPWCSVGTAAAVGIFIGALLSMRKS</sequence>
<evidence type="ECO:0000250" key="1"/>
<evidence type="ECO:0000255" key="2"/>
<evidence type="ECO:0000305" key="3"/>
<accession>P0ADQ9</accession>
<accession>P77800</accession>
<accession>Q47413</accession>
<protein>
    <recommendedName>
        <fullName>Uncharacterized protein YgaM</fullName>
    </recommendedName>
</protein>
<comment type="subunit">
    <text evidence="1">May bind to ribosomes.</text>
</comment>
<comment type="subcellular location">
    <subcellularLocation>
        <location evidence="3">Cell inner membrane</location>
        <topology evidence="3">Single-pass membrane protein</topology>
    </subcellularLocation>
</comment>
<comment type="similarity">
    <text evidence="3">Belongs to the ElaB/YgaM/YqjD family.</text>
</comment>
<comment type="sequence caution" evidence="3">
    <conflict type="erroneous initiation">
        <sequence resource="EMBL-CDS" id="AAG57780"/>
    </conflict>
    <text>Extended N-terminus.</text>
</comment>
<comment type="sequence caution" evidence="3">
    <conflict type="erroneous initiation">
        <sequence resource="EMBL-CDS" id="BAB36956"/>
    </conflict>
    <text>Extended N-terminus.</text>
</comment>
<name>YGAM_ECO57</name>
<organism>
    <name type="scientific">Escherichia coli O157:H7</name>
    <dbReference type="NCBI Taxonomy" id="83334"/>
    <lineage>
        <taxon>Bacteria</taxon>
        <taxon>Pseudomonadati</taxon>
        <taxon>Pseudomonadota</taxon>
        <taxon>Gammaproteobacteria</taxon>
        <taxon>Enterobacterales</taxon>
        <taxon>Enterobacteriaceae</taxon>
        <taxon>Escherichia</taxon>
    </lineage>
</organism>
<gene>
    <name type="primary">ygaM</name>
    <name type="ordered locus">Z3972</name>
    <name type="ordered locus">ECs3533</name>
</gene>
<reference key="1">
    <citation type="journal article" date="2001" name="Nature">
        <title>Genome sequence of enterohaemorrhagic Escherichia coli O157:H7.</title>
        <authorList>
            <person name="Perna N.T."/>
            <person name="Plunkett G. III"/>
            <person name="Burland V."/>
            <person name="Mau B."/>
            <person name="Glasner J.D."/>
            <person name="Rose D.J."/>
            <person name="Mayhew G.F."/>
            <person name="Evans P.S."/>
            <person name="Gregor J."/>
            <person name="Kirkpatrick H.A."/>
            <person name="Posfai G."/>
            <person name="Hackett J."/>
            <person name="Klink S."/>
            <person name="Boutin A."/>
            <person name="Shao Y."/>
            <person name="Miller L."/>
            <person name="Grotbeck E.J."/>
            <person name="Davis N.W."/>
            <person name="Lim A."/>
            <person name="Dimalanta E.T."/>
            <person name="Potamousis K."/>
            <person name="Apodaca J."/>
            <person name="Anantharaman T.S."/>
            <person name="Lin J."/>
            <person name="Yen G."/>
            <person name="Schwartz D.C."/>
            <person name="Welch R.A."/>
            <person name="Blattner F.R."/>
        </authorList>
    </citation>
    <scope>NUCLEOTIDE SEQUENCE [LARGE SCALE GENOMIC DNA]</scope>
    <source>
        <strain>O157:H7 / EDL933 / ATCC 700927 / EHEC</strain>
    </source>
</reference>
<reference key="2">
    <citation type="journal article" date="2001" name="DNA Res.">
        <title>Complete genome sequence of enterohemorrhagic Escherichia coli O157:H7 and genomic comparison with a laboratory strain K-12.</title>
        <authorList>
            <person name="Hayashi T."/>
            <person name="Makino K."/>
            <person name="Ohnishi M."/>
            <person name="Kurokawa K."/>
            <person name="Ishii K."/>
            <person name="Yokoyama K."/>
            <person name="Han C.-G."/>
            <person name="Ohtsubo E."/>
            <person name="Nakayama K."/>
            <person name="Murata T."/>
            <person name="Tanaka M."/>
            <person name="Tobe T."/>
            <person name="Iida T."/>
            <person name="Takami H."/>
            <person name="Honda T."/>
            <person name="Sasakawa C."/>
            <person name="Ogasawara N."/>
            <person name="Yasunaga T."/>
            <person name="Kuhara S."/>
            <person name="Shiba T."/>
            <person name="Hattori M."/>
            <person name="Shinagawa H."/>
        </authorList>
    </citation>
    <scope>NUCLEOTIDE SEQUENCE [LARGE SCALE GENOMIC DNA]</scope>
    <source>
        <strain>O157:H7 / Sakai / RIMD 0509952 / EHEC</strain>
    </source>
</reference>
<feature type="chain" id="PRO_0000169298" description="Uncharacterized protein YgaM">
    <location>
        <begin position="1"/>
        <end position="109"/>
    </location>
</feature>
<feature type="transmembrane region" description="Helical" evidence="2">
    <location>
        <begin position="87"/>
        <end position="106"/>
    </location>
</feature>
<dbReference type="EMBL" id="AE005174">
    <property type="protein sequence ID" value="AAG57780.1"/>
    <property type="status" value="ALT_INIT"/>
    <property type="molecule type" value="Genomic_DNA"/>
</dbReference>
<dbReference type="EMBL" id="BA000007">
    <property type="protein sequence ID" value="BAB36956.1"/>
    <property type="status" value="ALT_INIT"/>
    <property type="molecule type" value="Genomic_DNA"/>
</dbReference>
<dbReference type="PIR" id="E91070">
    <property type="entry name" value="E91070"/>
</dbReference>
<dbReference type="PIR" id="H85914">
    <property type="entry name" value="H85914"/>
</dbReference>
<dbReference type="RefSeq" id="NP_311560.2">
    <property type="nucleotide sequence ID" value="NC_002695.1"/>
</dbReference>
<dbReference type="RefSeq" id="WP_001295174.1">
    <property type="nucleotide sequence ID" value="NZ_VOAI01000003.1"/>
</dbReference>
<dbReference type="SMR" id="P0ADQ9"/>
<dbReference type="STRING" id="155864.Z3972"/>
<dbReference type="GeneID" id="914751"/>
<dbReference type="KEGG" id="ece:Z3972"/>
<dbReference type="KEGG" id="ecs:ECs_3533"/>
<dbReference type="PATRIC" id="fig|386585.9.peg.3687"/>
<dbReference type="eggNOG" id="COG4575">
    <property type="taxonomic scope" value="Bacteria"/>
</dbReference>
<dbReference type="HOGENOM" id="CLU_132623_4_1_6"/>
<dbReference type="OMA" id="INDDAQD"/>
<dbReference type="Proteomes" id="UP000000558">
    <property type="component" value="Chromosome"/>
</dbReference>
<dbReference type="Proteomes" id="UP000002519">
    <property type="component" value="Chromosome"/>
</dbReference>
<dbReference type="GO" id="GO:0005886">
    <property type="term" value="C:plasma membrane"/>
    <property type="evidence" value="ECO:0007669"/>
    <property type="project" value="UniProtKB-SubCell"/>
</dbReference>
<dbReference type="GO" id="GO:0043022">
    <property type="term" value="F:ribosome binding"/>
    <property type="evidence" value="ECO:0007669"/>
    <property type="project" value="InterPro"/>
</dbReference>
<dbReference type="InterPro" id="IPR043605">
    <property type="entry name" value="DUF883_C"/>
</dbReference>
<dbReference type="InterPro" id="IPR043604">
    <property type="entry name" value="DUF883_N"/>
</dbReference>
<dbReference type="InterPro" id="IPR010279">
    <property type="entry name" value="YqjD/ElaB"/>
</dbReference>
<dbReference type="NCBIfam" id="NF007523">
    <property type="entry name" value="PRK10132.1"/>
    <property type="match status" value="1"/>
</dbReference>
<dbReference type="PANTHER" id="PTHR35893:SF4">
    <property type="entry name" value="INNER MEMBRANE PROTEIN"/>
    <property type="match status" value="1"/>
</dbReference>
<dbReference type="PANTHER" id="PTHR35893">
    <property type="entry name" value="INNER MEMBRANE PROTEIN-RELATED"/>
    <property type="match status" value="1"/>
</dbReference>
<dbReference type="Pfam" id="PF05957">
    <property type="entry name" value="DUF883"/>
    <property type="match status" value="1"/>
</dbReference>
<dbReference type="Pfam" id="PF19029">
    <property type="entry name" value="DUF883_C"/>
    <property type="match status" value="1"/>
</dbReference>